<organism>
    <name type="scientific">Pelotomaculum thermopropionicum (strain DSM 13744 / JCM 10971 / SI)</name>
    <dbReference type="NCBI Taxonomy" id="370438"/>
    <lineage>
        <taxon>Bacteria</taxon>
        <taxon>Bacillati</taxon>
        <taxon>Bacillota</taxon>
        <taxon>Clostridia</taxon>
        <taxon>Eubacteriales</taxon>
        <taxon>Desulfotomaculaceae</taxon>
        <taxon>Pelotomaculum</taxon>
    </lineage>
</organism>
<keyword id="KW-0227">DNA damage</keyword>
<keyword id="KW-0234">DNA repair</keyword>
<keyword id="KW-0238">DNA-binding</keyword>
<keyword id="KW-0326">Glycosidase</keyword>
<keyword id="KW-0378">Hydrolase</keyword>
<keyword id="KW-0456">Lyase</keyword>
<keyword id="KW-0479">Metal-binding</keyword>
<keyword id="KW-0511">Multifunctional enzyme</keyword>
<keyword id="KW-1185">Reference proteome</keyword>
<keyword id="KW-0862">Zinc</keyword>
<keyword id="KW-0863">Zinc-finger</keyword>
<gene>
    <name evidence="2" type="primary">mutM</name>
    <name evidence="2" type="synonym">fpg</name>
    <name type="ordered locus">PTH_1977</name>
</gene>
<dbReference type="EC" id="3.2.2.23" evidence="2"/>
<dbReference type="EC" id="4.2.99.18" evidence="2"/>
<dbReference type="EMBL" id="AP009389">
    <property type="protein sequence ID" value="BAF60158.1"/>
    <property type="molecule type" value="Genomic_DNA"/>
</dbReference>
<dbReference type="SMR" id="A5D0T6"/>
<dbReference type="STRING" id="370438.PTH_1977"/>
<dbReference type="KEGG" id="pth:PTH_1977"/>
<dbReference type="eggNOG" id="COG0266">
    <property type="taxonomic scope" value="Bacteria"/>
</dbReference>
<dbReference type="HOGENOM" id="CLU_038423_1_2_9"/>
<dbReference type="Proteomes" id="UP000006556">
    <property type="component" value="Chromosome"/>
</dbReference>
<dbReference type="GO" id="GO:0034039">
    <property type="term" value="F:8-oxo-7,8-dihydroguanine DNA N-glycosylase activity"/>
    <property type="evidence" value="ECO:0007669"/>
    <property type="project" value="TreeGrafter"/>
</dbReference>
<dbReference type="GO" id="GO:0140078">
    <property type="term" value="F:class I DNA-(apurinic or apyrimidinic site) endonuclease activity"/>
    <property type="evidence" value="ECO:0007669"/>
    <property type="project" value="UniProtKB-EC"/>
</dbReference>
<dbReference type="GO" id="GO:0003684">
    <property type="term" value="F:damaged DNA binding"/>
    <property type="evidence" value="ECO:0007669"/>
    <property type="project" value="InterPro"/>
</dbReference>
<dbReference type="GO" id="GO:0008270">
    <property type="term" value="F:zinc ion binding"/>
    <property type="evidence" value="ECO:0007669"/>
    <property type="project" value="UniProtKB-UniRule"/>
</dbReference>
<dbReference type="GO" id="GO:0006284">
    <property type="term" value="P:base-excision repair"/>
    <property type="evidence" value="ECO:0007669"/>
    <property type="project" value="InterPro"/>
</dbReference>
<dbReference type="CDD" id="cd08966">
    <property type="entry name" value="EcFpg-like_N"/>
    <property type="match status" value="1"/>
</dbReference>
<dbReference type="FunFam" id="1.10.8.50:FF:000003">
    <property type="entry name" value="Formamidopyrimidine-DNA glycosylase"/>
    <property type="match status" value="1"/>
</dbReference>
<dbReference type="Gene3D" id="1.10.8.50">
    <property type="match status" value="1"/>
</dbReference>
<dbReference type="Gene3D" id="3.20.190.10">
    <property type="entry name" value="MutM-like, N-terminal"/>
    <property type="match status" value="1"/>
</dbReference>
<dbReference type="HAMAP" id="MF_00103">
    <property type="entry name" value="Fapy_DNA_glycosyl"/>
    <property type="match status" value="1"/>
</dbReference>
<dbReference type="InterPro" id="IPR015886">
    <property type="entry name" value="DNA_glyclase/AP_lyase_DNA-bd"/>
</dbReference>
<dbReference type="InterPro" id="IPR015887">
    <property type="entry name" value="DNA_glyclase_Znf_dom_DNA_BS"/>
</dbReference>
<dbReference type="InterPro" id="IPR020629">
    <property type="entry name" value="Formamido-pyr_DNA_Glyclase"/>
</dbReference>
<dbReference type="InterPro" id="IPR012319">
    <property type="entry name" value="FPG_cat"/>
</dbReference>
<dbReference type="InterPro" id="IPR035937">
    <property type="entry name" value="MutM-like_N-ter"/>
</dbReference>
<dbReference type="InterPro" id="IPR010979">
    <property type="entry name" value="Ribosomal_uS13-like_H2TH"/>
</dbReference>
<dbReference type="InterPro" id="IPR000214">
    <property type="entry name" value="Znf_DNA_glyclase/AP_lyase"/>
</dbReference>
<dbReference type="InterPro" id="IPR010663">
    <property type="entry name" value="Znf_FPG/IleRS"/>
</dbReference>
<dbReference type="NCBIfam" id="TIGR00577">
    <property type="entry name" value="fpg"/>
    <property type="match status" value="1"/>
</dbReference>
<dbReference type="NCBIfam" id="NF002211">
    <property type="entry name" value="PRK01103.1"/>
    <property type="match status" value="1"/>
</dbReference>
<dbReference type="PANTHER" id="PTHR22993">
    <property type="entry name" value="FORMAMIDOPYRIMIDINE-DNA GLYCOSYLASE"/>
    <property type="match status" value="1"/>
</dbReference>
<dbReference type="PANTHER" id="PTHR22993:SF9">
    <property type="entry name" value="FORMAMIDOPYRIMIDINE-DNA GLYCOSYLASE"/>
    <property type="match status" value="1"/>
</dbReference>
<dbReference type="Pfam" id="PF01149">
    <property type="entry name" value="Fapy_DNA_glyco"/>
    <property type="match status" value="1"/>
</dbReference>
<dbReference type="Pfam" id="PF06831">
    <property type="entry name" value="H2TH"/>
    <property type="match status" value="1"/>
</dbReference>
<dbReference type="Pfam" id="PF06827">
    <property type="entry name" value="zf-FPG_IleRS"/>
    <property type="match status" value="1"/>
</dbReference>
<dbReference type="SMART" id="SM00898">
    <property type="entry name" value="Fapy_DNA_glyco"/>
    <property type="match status" value="1"/>
</dbReference>
<dbReference type="SMART" id="SM01232">
    <property type="entry name" value="H2TH"/>
    <property type="match status" value="1"/>
</dbReference>
<dbReference type="SUPFAM" id="SSF57716">
    <property type="entry name" value="Glucocorticoid receptor-like (DNA-binding domain)"/>
    <property type="match status" value="1"/>
</dbReference>
<dbReference type="SUPFAM" id="SSF81624">
    <property type="entry name" value="N-terminal domain of MutM-like DNA repair proteins"/>
    <property type="match status" value="1"/>
</dbReference>
<dbReference type="SUPFAM" id="SSF46946">
    <property type="entry name" value="S13-like H2TH domain"/>
    <property type="match status" value="1"/>
</dbReference>
<dbReference type="PROSITE" id="PS51068">
    <property type="entry name" value="FPG_CAT"/>
    <property type="match status" value="1"/>
</dbReference>
<dbReference type="PROSITE" id="PS01242">
    <property type="entry name" value="ZF_FPG_1"/>
    <property type="match status" value="1"/>
</dbReference>
<dbReference type="PROSITE" id="PS51066">
    <property type="entry name" value="ZF_FPG_2"/>
    <property type="match status" value="1"/>
</dbReference>
<reference key="1">
    <citation type="journal article" date="2008" name="Genome Res.">
        <title>The genome of Pelotomaculum thermopropionicum reveals niche-associated evolution in anaerobic microbiota.</title>
        <authorList>
            <person name="Kosaka T."/>
            <person name="Kato S."/>
            <person name="Shimoyama T."/>
            <person name="Ishii S."/>
            <person name="Abe T."/>
            <person name="Watanabe K."/>
        </authorList>
    </citation>
    <scope>NUCLEOTIDE SEQUENCE [LARGE SCALE GENOMIC DNA]</scope>
    <source>
        <strain>DSM 13744 / JCM 10971 / SI</strain>
    </source>
</reference>
<name>FPG_PELTS</name>
<feature type="initiator methionine" description="Removed" evidence="1">
    <location>
        <position position="1"/>
    </location>
</feature>
<feature type="chain" id="PRO_1000075704" description="Formamidopyrimidine-DNA glycosylase">
    <location>
        <begin position="2"/>
        <end position="276"/>
    </location>
</feature>
<feature type="zinc finger region" description="FPG-type" evidence="2">
    <location>
        <begin position="240"/>
        <end position="274"/>
    </location>
</feature>
<feature type="active site" description="Schiff-base intermediate with DNA" evidence="2">
    <location>
        <position position="2"/>
    </location>
</feature>
<feature type="active site" description="Proton donor" evidence="2">
    <location>
        <position position="3"/>
    </location>
</feature>
<feature type="active site" description="Proton donor; for beta-elimination activity" evidence="2">
    <location>
        <position position="59"/>
    </location>
</feature>
<feature type="active site" description="Proton donor; for delta-elimination activity" evidence="2">
    <location>
        <position position="264"/>
    </location>
</feature>
<feature type="binding site" evidence="2">
    <location>
        <position position="93"/>
    </location>
    <ligand>
        <name>DNA</name>
        <dbReference type="ChEBI" id="CHEBI:16991"/>
    </ligand>
</feature>
<feature type="binding site" evidence="2">
    <location>
        <position position="112"/>
    </location>
    <ligand>
        <name>DNA</name>
        <dbReference type="ChEBI" id="CHEBI:16991"/>
    </ligand>
</feature>
<feature type="binding site" evidence="2">
    <location>
        <position position="155"/>
    </location>
    <ligand>
        <name>DNA</name>
        <dbReference type="ChEBI" id="CHEBI:16991"/>
    </ligand>
</feature>
<accession>A5D0T6</accession>
<evidence type="ECO:0000250" key="1"/>
<evidence type="ECO:0000255" key="2">
    <source>
        <dbReference type="HAMAP-Rule" id="MF_00103"/>
    </source>
</evidence>
<sequence>MPELPEVETVRRTLQAKLPGLKITGVEVLLPKVIRSPELSEFKETIADKKILKVGRRGKYLLINLSEGYTLAVHLRMTGRLVYCAGQDPPARHTHVIFNLSNGCQLHFADMRQFGRIWLVPTDALDGLKGIKELGVEPLEELFTREFLKKELRRRHARIKPLLLDQTFIAGLGNIYADEALHRARINPERLATTLTPREIARLYRAIRDLLQEGIENRGTTVRDFIDGNGQAGNYQEFLQVYNREGKPCPRCGDKIAKKKVGGRSSYYCPTCQKVK</sequence>
<comment type="function">
    <text evidence="2">Involved in base excision repair of DNA damaged by oxidation or by mutagenic agents. Acts as a DNA glycosylase that recognizes and removes damaged bases. Has a preference for oxidized purines, such as 7,8-dihydro-8-oxoguanine (8-oxoG). Has AP (apurinic/apyrimidinic) lyase activity and introduces nicks in the DNA strand. Cleaves the DNA backbone by beta-delta elimination to generate a single-strand break at the site of the removed base with both 3'- and 5'-phosphates.</text>
</comment>
<comment type="catalytic activity">
    <reaction evidence="2">
        <text>Hydrolysis of DNA containing ring-opened 7-methylguanine residues, releasing 2,6-diamino-4-hydroxy-5-(N-methyl)formamidopyrimidine.</text>
        <dbReference type="EC" id="3.2.2.23"/>
    </reaction>
</comment>
<comment type="catalytic activity">
    <reaction evidence="2">
        <text>2'-deoxyribonucleotide-(2'-deoxyribose 5'-phosphate)-2'-deoxyribonucleotide-DNA = a 3'-end 2'-deoxyribonucleotide-(2,3-dehydro-2,3-deoxyribose 5'-phosphate)-DNA + a 5'-end 5'-phospho-2'-deoxyribonucleoside-DNA + H(+)</text>
        <dbReference type="Rhea" id="RHEA:66592"/>
        <dbReference type="Rhea" id="RHEA-COMP:13180"/>
        <dbReference type="Rhea" id="RHEA-COMP:16897"/>
        <dbReference type="Rhea" id="RHEA-COMP:17067"/>
        <dbReference type="ChEBI" id="CHEBI:15378"/>
        <dbReference type="ChEBI" id="CHEBI:136412"/>
        <dbReference type="ChEBI" id="CHEBI:157695"/>
        <dbReference type="ChEBI" id="CHEBI:167181"/>
        <dbReference type="EC" id="4.2.99.18"/>
    </reaction>
</comment>
<comment type="cofactor">
    <cofactor evidence="2">
        <name>Zn(2+)</name>
        <dbReference type="ChEBI" id="CHEBI:29105"/>
    </cofactor>
    <text evidence="2">Binds 1 zinc ion per subunit.</text>
</comment>
<comment type="subunit">
    <text evidence="2">Monomer.</text>
</comment>
<comment type="similarity">
    <text evidence="2">Belongs to the FPG family.</text>
</comment>
<protein>
    <recommendedName>
        <fullName evidence="2">Formamidopyrimidine-DNA glycosylase</fullName>
        <shortName evidence="2">Fapy-DNA glycosylase</shortName>
        <ecNumber evidence="2">3.2.2.23</ecNumber>
    </recommendedName>
    <alternativeName>
        <fullName evidence="2">DNA-(apurinic or apyrimidinic site) lyase MutM</fullName>
        <shortName evidence="2">AP lyase MutM</shortName>
        <ecNumber evidence="2">4.2.99.18</ecNumber>
    </alternativeName>
</protein>
<proteinExistence type="inferred from homology"/>